<sequence>MRSYLRFSDRHRQRPTRPRKRVICSSAHFICSRMSPAATAQSPFGISLHSLSFRLLLIFRGSIVAMSRRFVYKLDQAVTAALGPNGRYIAMVGMTASAVLLTFHYKFREVIAATDNVAEIQSPSKLFYLRLLFGRTRSRITGSVMNINIMPALRDPIYRTLASVGGIDTEEIRYPLRSYKCIGHLFARTLKDKEREIEDIGTQSLASPADGVVTALGDVSSERVEQVKGATYSLRAFLGLMPKVTNPEKNTLKFVVLHLKPKNYHHFHAPAKFDVNVLRHMTGETLPVFSSFLKRFNDIFSVNERVVMSGNWKYGCMHMVAVAAYNVGNIRIDKEPSLRTNELRVVLRHLGGDVETRTYSRQPFEYSVGQHVGEFRLGSTIVLIFEAPHNFTWDMKPGQEVRVGQRLGGVGPIRRAQTEDERLFAFY</sequence>
<gene>
    <name evidence="4" type="primary">PSD1mt</name>
    <name type="ORF">TGGT1_225550</name>
</gene>
<keyword id="KW-0210">Decarboxylase</keyword>
<keyword id="KW-0444">Lipid biosynthesis</keyword>
<keyword id="KW-0443">Lipid metabolism</keyword>
<keyword id="KW-0456">Lyase</keyword>
<keyword id="KW-0472">Membrane</keyword>
<keyword id="KW-0496">Mitochondrion</keyword>
<keyword id="KW-0999">Mitochondrion inner membrane</keyword>
<keyword id="KW-0594">Phospholipid biosynthesis</keyword>
<keyword id="KW-1208">Phospholipid metabolism</keyword>
<keyword id="KW-0670">Pyruvate</keyword>
<keyword id="KW-0809">Transit peptide</keyword>
<keyword id="KW-0812">Transmembrane</keyword>
<keyword id="KW-1133">Transmembrane helix</keyword>
<keyword id="KW-0865">Zymogen</keyword>
<comment type="function">
    <text evidence="2 3">Catalyzes the formation of phosphatidylethanolamine (PtdEtn) from phosphatidylserine (PtdSer). Plays a central role in phospholipid metabolism and in the interorganelle trafficking of phosphatidylserine.</text>
</comment>
<comment type="catalytic activity">
    <reaction evidence="2 3">
        <text>a 1,2-diacyl-sn-glycero-3-phospho-L-serine + H(+) = a 1,2-diacyl-sn-glycero-3-phosphoethanolamine + CO2</text>
        <dbReference type="Rhea" id="RHEA:20828"/>
        <dbReference type="ChEBI" id="CHEBI:15378"/>
        <dbReference type="ChEBI" id="CHEBI:16526"/>
        <dbReference type="ChEBI" id="CHEBI:57262"/>
        <dbReference type="ChEBI" id="CHEBI:64612"/>
        <dbReference type="EC" id="4.1.1.65"/>
    </reaction>
</comment>
<comment type="cofactor">
    <cofactor evidence="2">
        <name>pyruvate</name>
        <dbReference type="ChEBI" id="CHEBI:15361"/>
    </cofactor>
    <text evidence="2">Binds 1 pyruvoyl group covalently per subunit.</text>
</comment>
<comment type="pathway">
    <text evidence="2">Phospholipid metabolism; phosphatidylethanolamine biosynthesis; phosphatidylethanolamine from CDP-diacylglycerol: step 2/2.</text>
</comment>
<comment type="subunit">
    <text evidence="2">Heterodimer of a large membrane-associated beta subunit and a small pyruvoyl-containing alpha subunit.</text>
</comment>
<comment type="subcellular location">
    <molecule>Phosphatidylserine decarboxylase 1 beta chain</molecule>
    <subcellularLocation>
        <location evidence="3">Mitochondrion</location>
    </subcellularLocation>
    <subcellularLocation>
        <location evidence="2">Mitochondrion inner membrane</location>
        <topology evidence="2">Single-pass membrane protein</topology>
        <orientation evidence="2">Intermembrane side</orientation>
    </subcellularLocation>
</comment>
<comment type="subcellular location">
    <molecule>Phosphatidylserine decarboxylase 1 alpha chain</molecule>
    <subcellularLocation>
        <location evidence="3">Mitochondrion</location>
    </subcellularLocation>
    <subcellularLocation>
        <location evidence="2">Mitochondrion inner membrane</location>
        <topology evidence="2">Peripheral membrane protein</topology>
        <orientation evidence="2">Intermembrane side</orientation>
    </subcellularLocation>
    <text evidence="2">Anchored to the mitochondrial inner membrane through its interaction with the integral membrane beta chain.</text>
</comment>
<comment type="PTM">
    <text evidence="2">Is synthesized initially as an inactive proenzyme. Formation of the active enzyme involves a self-maturation process in which the active site pyruvoyl group is generated from an internal serine residue via an autocatalytic post-translational modification. Two non-identical subunits are generated from the proenzyme in this reaction, and the pyruvate is formed at the N-terminus of the alpha chain, which is derived from the carboxyl end of the proenzyme. The autoendoproteolytic cleavage occurs by a canonical serine protease mechanism, in which the side chain hydroxyl group of the serine supplies its oxygen atom to form the C-terminus of the beta chain, while the remainder of the serine residue undergoes an oxidative deamination to produce ammonia and the pyruvoyl prosthetic group on the alpha chain. During this reaction, the Ser that is part of the protease active site of the proenzyme becomes the pyruvoyl prosthetic group, which constitutes an essential element of the active site of the mature decarboxylase.</text>
</comment>
<comment type="similarity">
    <text evidence="2">Belongs to the phosphatidylserine decarboxylase family. PSD-B subfamily. Eukaryotic type I sub-subfamily.</text>
</comment>
<organism>
    <name type="scientific">Toxoplasma gondii (strain ATCC 50853 / GT1)</name>
    <dbReference type="NCBI Taxonomy" id="507601"/>
    <lineage>
        <taxon>Eukaryota</taxon>
        <taxon>Sar</taxon>
        <taxon>Alveolata</taxon>
        <taxon>Apicomplexa</taxon>
        <taxon>Conoidasida</taxon>
        <taxon>Coccidia</taxon>
        <taxon>Eucoccidiorida</taxon>
        <taxon>Eimeriorina</taxon>
        <taxon>Sarcocystidae</taxon>
        <taxon>Toxoplasma</taxon>
    </lineage>
</organism>
<accession>Q1PCQ8</accession>
<accession>B9PMG9</accession>
<accession>B9Q7U1</accession>
<accession>S7UWD8</accession>
<proteinExistence type="evidence at protein level"/>
<feature type="transit peptide" description="Mitochondrion" evidence="1">
    <location>
        <begin position="1"/>
        <end position="77"/>
    </location>
</feature>
<feature type="chain" id="PRO_0000435583" description="Phosphatidylserine decarboxylase proenzyme 1, mitochondrial">
    <location>
        <begin position="78"/>
        <end position="427"/>
    </location>
</feature>
<feature type="chain" id="PRO_0000435584" description="Phosphatidylserine decarboxylase 1 beta chain" evidence="2">
    <location>
        <begin position="78"/>
        <end position="378"/>
    </location>
</feature>
<feature type="chain" id="PRO_0000435585" description="Phosphatidylserine decarboxylase 1 alpha chain" evidence="2">
    <location>
        <begin position="379"/>
        <end position="427"/>
    </location>
</feature>
<feature type="topological domain" description="Mitochondrial matrix" evidence="2">
    <location>
        <begin position="78"/>
        <end position="88"/>
    </location>
</feature>
<feature type="transmembrane region" description="Helical" evidence="2">
    <location>
        <begin position="89"/>
        <end position="107"/>
    </location>
</feature>
<feature type="topological domain" description="Mitochondrial intermembrane" evidence="2">
    <location>
        <begin position="108"/>
        <end position="427"/>
    </location>
</feature>
<feature type="active site" description="Charge relay system; for autoendoproteolytic cleavage activity" evidence="2">
    <location>
        <position position="210"/>
    </location>
</feature>
<feature type="active site" description="Charge relay system; for autoendoproteolytic cleavage activity" evidence="2">
    <location>
        <position position="268"/>
    </location>
</feature>
<feature type="active site" description="Charge relay system; for autoendoproteolytic cleavage activity" evidence="2">
    <location>
        <position position="379"/>
    </location>
</feature>
<feature type="active site" description="Schiff-base intermediate with substrate; via pyruvic acid; for decarboxylase activity" evidence="2">
    <location>
        <position position="379"/>
    </location>
</feature>
<feature type="site" description="Cleavage (non-hydrolytic); by autocatalysis" evidence="2">
    <location>
        <begin position="378"/>
        <end position="379"/>
    </location>
</feature>
<feature type="modified residue" description="Pyruvic acid (Ser); by autocatalysis" evidence="2">
    <location>
        <position position="379"/>
    </location>
</feature>
<protein>
    <recommendedName>
        <fullName evidence="4">Phosphatidylserine decarboxylase proenzyme 1, mitochondrial</fullName>
        <ecNumber evidence="2 3">4.1.1.65</ecNumber>
    </recommendedName>
    <component>
        <recommendedName>
            <fullName evidence="5">Phosphatidylserine decarboxylase 1 beta chain</fullName>
        </recommendedName>
    </component>
    <component>
        <recommendedName>
            <fullName evidence="5">Phosphatidylserine decarboxylase 1 alpha chain</fullName>
        </recommendedName>
    </component>
</protein>
<evidence type="ECO:0000255" key="1"/>
<evidence type="ECO:0000255" key="2">
    <source>
        <dbReference type="HAMAP-Rule" id="MF_03208"/>
    </source>
</evidence>
<evidence type="ECO:0000269" key="3">
    <source>
    </source>
</evidence>
<evidence type="ECO:0000303" key="4">
    <source>
    </source>
</evidence>
<evidence type="ECO:0000305" key="5">
    <source>
    </source>
</evidence>
<dbReference type="EC" id="4.1.1.65" evidence="2 3"/>
<dbReference type="EMBL" id="DQ450198">
    <property type="protein sequence ID" value="ABE03002.2"/>
    <property type="molecule type" value="mRNA"/>
</dbReference>
<dbReference type="EMBL" id="AAQM03000107">
    <property type="protein sequence ID" value="EPR62136.1"/>
    <property type="molecule type" value="Genomic_DNA"/>
</dbReference>
<dbReference type="SMR" id="Q1PCQ8"/>
<dbReference type="EnsemblProtists" id="EPR62136">
    <property type="protein sequence ID" value="EPR62136"/>
    <property type="gene ID" value="TGGT1_225550"/>
</dbReference>
<dbReference type="VEuPathDB" id="ToxoDB:TGGT1_225550"/>
<dbReference type="HOGENOM" id="CLU_029061_3_1_1"/>
<dbReference type="UniPathway" id="UPA00558">
    <property type="reaction ID" value="UER00616"/>
</dbReference>
<dbReference type="Proteomes" id="UP000005641">
    <property type="component" value="Unassembled WGS sequence"/>
</dbReference>
<dbReference type="GO" id="GO:0005743">
    <property type="term" value="C:mitochondrial inner membrane"/>
    <property type="evidence" value="ECO:0007669"/>
    <property type="project" value="UniProtKB-SubCell"/>
</dbReference>
<dbReference type="GO" id="GO:0004609">
    <property type="term" value="F:phosphatidylserine decarboxylase activity"/>
    <property type="evidence" value="ECO:0007669"/>
    <property type="project" value="UniProtKB-UniRule"/>
</dbReference>
<dbReference type="GO" id="GO:0006646">
    <property type="term" value="P:phosphatidylethanolamine biosynthetic process"/>
    <property type="evidence" value="ECO:0007669"/>
    <property type="project" value="UniProtKB-UniRule"/>
</dbReference>
<dbReference type="GO" id="GO:0016540">
    <property type="term" value="P:protein autoprocessing"/>
    <property type="evidence" value="ECO:0007669"/>
    <property type="project" value="UniProtKB-UniRule"/>
</dbReference>
<dbReference type="HAMAP" id="MF_03208">
    <property type="entry name" value="PS_decarb_PSD_B_type1_euk"/>
    <property type="match status" value="1"/>
</dbReference>
<dbReference type="InterPro" id="IPR003817">
    <property type="entry name" value="PS_Dcarbxylase"/>
</dbReference>
<dbReference type="InterPro" id="IPR033177">
    <property type="entry name" value="PSD-B"/>
</dbReference>
<dbReference type="InterPro" id="IPR033661">
    <property type="entry name" value="PSD_type1_euk"/>
</dbReference>
<dbReference type="NCBIfam" id="TIGR00163">
    <property type="entry name" value="PS_decarb"/>
    <property type="match status" value="1"/>
</dbReference>
<dbReference type="PANTHER" id="PTHR10067">
    <property type="entry name" value="PHOSPHATIDYLSERINE DECARBOXYLASE"/>
    <property type="match status" value="1"/>
</dbReference>
<dbReference type="PANTHER" id="PTHR10067:SF6">
    <property type="entry name" value="PHOSPHATIDYLSERINE DECARBOXYLASE PROENZYME, MITOCHONDRIAL"/>
    <property type="match status" value="1"/>
</dbReference>
<dbReference type="Pfam" id="PF02666">
    <property type="entry name" value="PS_Dcarbxylase"/>
    <property type="match status" value="1"/>
</dbReference>
<name>PSD1_TOXGG</name>
<reference key="1">
    <citation type="journal article" date="2014" name="J. Biol. Chem.">
        <title>Phosphatidylethanolamine synthesis in the parasite mitochondrion is required for efficient growth but dispensable for survival of Toxoplasma gondii.</title>
        <authorList>
            <person name="Hartmann A."/>
            <person name="Hellmund M."/>
            <person name="Lucius R."/>
            <person name="Voelker D.R."/>
            <person name="Gupta N."/>
        </authorList>
    </citation>
    <scope>NUCLEOTIDE SEQUENCE [MRNA]</scope>
    <scope>FUNCTION</scope>
    <scope>CATALYTIC ACTIVITY</scope>
    <scope>SUBCELLULAR LOCATION</scope>
</reference>
<reference key="2">
    <citation type="submission" date="2013-05" db="EMBL/GenBank/DDBJ databases">
        <authorList>
            <person name="Sibley D."/>
            <person name="Venepally P."/>
            <person name="Karamycheva S."/>
            <person name="Hadjithomas M."/>
            <person name="Khan A."/>
            <person name="Brunk B."/>
            <person name="Roos D."/>
            <person name="Caler E."/>
            <person name="Lorenzi H."/>
        </authorList>
    </citation>
    <scope>NUCLEOTIDE SEQUENCE [LARGE SCALE GENOMIC DNA]</scope>
    <source>
        <strain>ATCC 50853 / GT1</strain>
    </source>
</reference>